<reference key="1">
    <citation type="journal article" date="1998" name="J. Biol. Chem.">
        <title>Group II chaperonin in a thermophilic methanogen, Methanococcus thermolithotrophicus. Chaperone activity and filament-forming ability.</title>
        <authorList>
            <person name="Furutani M."/>
            <person name="Iida T."/>
            <person name="Yoshida T."/>
            <person name="Maruyama T."/>
        </authorList>
    </citation>
    <scope>NUCLEOTIDE SEQUENCE [GENOMIC DNA]</scope>
    <scope>CHARACTERIZATION</scope>
    <source>
        <strain>ATCC 35097 / DSM 2095 / JCM 10549 / OCM 138 / SN-1</strain>
    </source>
</reference>
<organism>
    <name type="scientific">Methanothermococcus thermolithotrophicus</name>
    <name type="common">Methanococcus thermolithotrophicus</name>
    <dbReference type="NCBI Taxonomy" id="2186"/>
    <lineage>
        <taxon>Archaea</taxon>
        <taxon>Methanobacteriati</taxon>
        <taxon>Methanobacteriota</taxon>
        <taxon>Methanomada group</taxon>
        <taxon>Methanococci</taxon>
        <taxon>Methanococcales</taxon>
        <taxon>Methanococcaceae</taxon>
        <taxon>Methanothermococcus</taxon>
    </lineage>
</organism>
<dbReference type="EMBL" id="AB015435">
    <property type="protein sequence ID" value="BAA33889.1"/>
    <property type="molecule type" value="Genomic_DNA"/>
</dbReference>
<dbReference type="PIR" id="T43845">
    <property type="entry name" value="T43845"/>
</dbReference>
<dbReference type="SMR" id="O93624"/>
<dbReference type="GO" id="GO:0005524">
    <property type="term" value="F:ATP binding"/>
    <property type="evidence" value="ECO:0007669"/>
    <property type="project" value="UniProtKB-KW"/>
</dbReference>
<dbReference type="GO" id="GO:0016887">
    <property type="term" value="F:ATP hydrolysis activity"/>
    <property type="evidence" value="ECO:0007669"/>
    <property type="project" value="InterPro"/>
</dbReference>
<dbReference type="GO" id="GO:0140662">
    <property type="term" value="F:ATP-dependent protein folding chaperone"/>
    <property type="evidence" value="ECO:0007669"/>
    <property type="project" value="InterPro"/>
</dbReference>
<dbReference type="GO" id="GO:0051082">
    <property type="term" value="F:unfolded protein binding"/>
    <property type="evidence" value="ECO:0007669"/>
    <property type="project" value="InterPro"/>
</dbReference>
<dbReference type="CDD" id="cd03343">
    <property type="entry name" value="cpn60"/>
    <property type="match status" value="1"/>
</dbReference>
<dbReference type="FunFam" id="1.10.560.10:FF:000017">
    <property type="entry name" value="T-complex protein 1 subunit eta"/>
    <property type="match status" value="1"/>
</dbReference>
<dbReference type="FunFam" id="3.50.7.10:FF:000014">
    <property type="entry name" value="Thermosome subunit"/>
    <property type="match status" value="1"/>
</dbReference>
<dbReference type="Gene3D" id="3.50.7.10">
    <property type="entry name" value="GroEL"/>
    <property type="match status" value="1"/>
</dbReference>
<dbReference type="Gene3D" id="1.10.560.10">
    <property type="entry name" value="GroEL-like equatorial domain"/>
    <property type="match status" value="1"/>
</dbReference>
<dbReference type="Gene3D" id="3.30.260.10">
    <property type="entry name" value="TCP-1-like chaperonin intermediate domain"/>
    <property type="match status" value="1"/>
</dbReference>
<dbReference type="InterPro" id="IPR017998">
    <property type="entry name" value="Chaperone_TCP-1"/>
</dbReference>
<dbReference type="InterPro" id="IPR002194">
    <property type="entry name" value="Chaperonin_TCP-1_CS"/>
</dbReference>
<dbReference type="InterPro" id="IPR002423">
    <property type="entry name" value="Cpn60/GroEL/TCP-1"/>
</dbReference>
<dbReference type="InterPro" id="IPR027409">
    <property type="entry name" value="GroEL-like_apical_dom_sf"/>
</dbReference>
<dbReference type="InterPro" id="IPR027413">
    <property type="entry name" value="GROEL-like_equatorial_sf"/>
</dbReference>
<dbReference type="InterPro" id="IPR027410">
    <property type="entry name" value="TCP-1-like_intermed_sf"/>
</dbReference>
<dbReference type="InterPro" id="IPR053374">
    <property type="entry name" value="TCP-1_chaperonin"/>
</dbReference>
<dbReference type="InterPro" id="IPR054827">
    <property type="entry name" value="thermosome_alpha"/>
</dbReference>
<dbReference type="InterPro" id="IPR012714">
    <property type="entry name" value="Thermosome_arc"/>
</dbReference>
<dbReference type="NCBIfam" id="NF041082">
    <property type="entry name" value="thermosome_alpha"/>
    <property type="match status" value="1"/>
</dbReference>
<dbReference type="NCBIfam" id="TIGR02339">
    <property type="entry name" value="thermosome_arch"/>
    <property type="match status" value="1"/>
</dbReference>
<dbReference type="NCBIfam" id="NF041083">
    <property type="entry name" value="thermosome_beta"/>
    <property type="match status" value="1"/>
</dbReference>
<dbReference type="PANTHER" id="PTHR11353">
    <property type="entry name" value="CHAPERONIN"/>
    <property type="match status" value="1"/>
</dbReference>
<dbReference type="Pfam" id="PF00118">
    <property type="entry name" value="Cpn60_TCP1"/>
    <property type="match status" value="1"/>
</dbReference>
<dbReference type="PRINTS" id="PR00304">
    <property type="entry name" value="TCOMPLEXTCP1"/>
</dbReference>
<dbReference type="SUPFAM" id="SSF52029">
    <property type="entry name" value="GroEL apical domain-like"/>
    <property type="match status" value="1"/>
</dbReference>
<dbReference type="SUPFAM" id="SSF48592">
    <property type="entry name" value="GroEL equatorial domain-like"/>
    <property type="match status" value="1"/>
</dbReference>
<dbReference type="SUPFAM" id="SSF54849">
    <property type="entry name" value="GroEL-intermediate domain like"/>
    <property type="match status" value="1"/>
</dbReference>
<dbReference type="PROSITE" id="PS00750">
    <property type="entry name" value="TCP1_1"/>
    <property type="match status" value="1"/>
</dbReference>
<dbReference type="PROSITE" id="PS00751">
    <property type="entry name" value="TCP1_2"/>
    <property type="match status" value="1"/>
</dbReference>
<dbReference type="PROSITE" id="PS00995">
    <property type="entry name" value="TCP1_3"/>
    <property type="match status" value="1"/>
</dbReference>
<name>THS_METTL</name>
<comment type="function">
    <text>Molecular chaperone; binds unfolded polypeptides in vitro, and has a weak ATPase activity.</text>
</comment>
<comment type="subunit">
    <text>Forms an oligomeric complex of eight-membered rings.</text>
</comment>
<comment type="similarity">
    <text evidence="1">Belongs to the TCP-1 chaperonin family.</text>
</comment>
<proteinExistence type="evidence at protein level"/>
<sequence>MAANQPVVVLPENVKRFMGRDAQRMNILAGRIIGETVRSTLGPKGMDKMLVDDLGDIVVTNDGVTILKEMSVEHPAAKMLIEVAKTQEKEVGDGTTTAVVIAGELLRKAEELLDQNVHPTIVIKGYQLAVQKAQEVLKEIAMDVKADDKEILHKIAMTSITGKGAEKAKEKLGEMIVEAVTAVVDESGKVDKDLIKIEKKEGASVDETELINGVLIDKERVSPQMPKKIENAKIALLNCPIEVKETETDAEIRITDPTKLMEFIEQEEKMLKDMVDTIKASGANVLFCQKGIDDLAQHYLAKEGILAVRRVKKSDMEKLSKATGANVVTNIKDLKAEDLGEAGIVEERKIAGDAMIFVEECKHPKAVTMLIRGTTEHVIEEVARAVDDAIGVVACTIEDGKIVAGGGAAEIELAMKLRDYAEGVSGREQLAVRAFADALEVVPRTLAENAGLDAIEMLVKLRAKHAEGNNAYYGLNVFTGDVENMTENGVVEPLRVKTQAIQSATEATEMLLRIDDVIAAEKLSGGSGGDMGDMGGMGGMGGMM</sequence>
<keyword id="KW-0067">ATP-binding</keyword>
<keyword id="KW-0143">Chaperone</keyword>
<keyword id="KW-0547">Nucleotide-binding</keyword>
<evidence type="ECO:0000305" key="1"/>
<gene>
    <name type="primary">ths</name>
</gene>
<feature type="chain" id="PRO_0000128392" description="Thermosome subunit">
    <location>
        <begin position="1"/>
        <end position="544"/>
    </location>
</feature>
<protein>
    <recommendedName>
        <fullName>Thermosome subunit</fullName>
    </recommendedName>
    <alternativeName>
        <fullName>Chaperonin subunit</fullName>
    </alternativeName>
</protein>
<accession>O93624</accession>